<feature type="chain" id="PRO_1000045545" description="Fumarate reductase subunit D">
    <location>
        <begin position="1"/>
        <end position="119"/>
    </location>
</feature>
<feature type="transmembrane region" description="Helical" evidence="1">
    <location>
        <begin position="26"/>
        <end position="46"/>
    </location>
</feature>
<feature type="transmembrane region" description="Helical" evidence="1">
    <location>
        <begin position="55"/>
        <end position="75"/>
    </location>
</feature>
<feature type="transmembrane region" description="Helical" evidence="1">
    <location>
        <begin position="99"/>
        <end position="119"/>
    </location>
</feature>
<reference key="1">
    <citation type="journal article" date="2007" name="J. Bacteriol.">
        <title>The genome sequence of avian pathogenic Escherichia coli strain O1:K1:H7 shares strong similarities with human extraintestinal pathogenic E. coli genomes.</title>
        <authorList>
            <person name="Johnson T.J."/>
            <person name="Kariyawasam S."/>
            <person name="Wannemuehler Y."/>
            <person name="Mangiamele P."/>
            <person name="Johnson S.J."/>
            <person name="Doetkott C."/>
            <person name="Skyberg J.A."/>
            <person name="Lynne A.M."/>
            <person name="Johnson J.R."/>
            <person name="Nolan L.K."/>
        </authorList>
    </citation>
    <scope>NUCLEOTIDE SEQUENCE [LARGE SCALE GENOMIC DNA]</scope>
</reference>
<name>FRDD_ECOK1</name>
<keyword id="KW-0997">Cell inner membrane</keyword>
<keyword id="KW-1003">Cell membrane</keyword>
<keyword id="KW-0472">Membrane</keyword>
<keyword id="KW-1185">Reference proteome</keyword>
<keyword id="KW-0812">Transmembrane</keyword>
<keyword id="KW-1133">Transmembrane helix</keyword>
<evidence type="ECO:0000255" key="1">
    <source>
        <dbReference type="HAMAP-Rule" id="MF_00709"/>
    </source>
</evidence>
<gene>
    <name evidence="1" type="primary">frdD</name>
    <name type="ordered locus">Ecok1_42050</name>
    <name type="ORF">APECO1_2238</name>
</gene>
<organism>
    <name type="scientific">Escherichia coli O1:K1 / APEC</name>
    <dbReference type="NCBI Taxonomy" id="405955"/>
    <lineage>
        <taxon>Bacteria</taxon>
        <taxon>Pseudomonadati</taxon>
        <taxon>Pseudomonadota</taxon>
        <taxon>Gammaproteobacteria</taxon>
        <taxon>Enterobacterales</taxon>
        <taxon>Enterobacteriaceae</taxon>
        <taxon>Escherichia</taxon>
    </lineage>
</organism>
<accession>A1AJ59</accession>
<proteinExistence type="inferred from homology"/>
<comment type="function">
    <text evidence="1">Two distinct, membrane-bound, FAD-containing enzymes are responsible for the catalysis of fumarate and succinate interconversion; fumarate reductase is used in anaerobic growth, and succinate dehydrogenase is used in aerobic growth. Anchors the catalytic components of the fumarate reductase complex to the cell inner membrane, binds quinones.</text>
</comment>
<comment type="subunit">
    <text evidence="1">Part of an enzyme complex containing four subunits: a flavoprotein (FrdA), an iron-sulfur protein (FrdB), and two hydrophobic anchor proteins (FrdC and FrdD).</text>
</comment>
<comment type="subcellular location">
    <subcellularLocation>
        <location evidence="1">Cell inner membrane</location>
        <topology evidence="1">Multi-pass membrane protein</topology>
    </subcellularLocation>
</comment>
<comment type="similarity">
    <text evidence="1">Belongs to the FrdD family.</text>
</comment>
<protein>
    <recommendedName>
        <fullName evidence="1">Fumarate reductase subunit D</fullName>
    </recommendedName>
    <alternativeName>
        <fullName evidence="1">Fumarate reductase 13 kDa hydrophobic protein</fullName>
    </alternativeName>
    <alternativeName>
        <fullName evidence="1">Quinol-fumarate reductase subunit D</fullName>
        <shortName evidence="1">QFR subunit D</shortName>
    </alternativeName>
</protein>
<dbReference type="EMBL" id="CP000468">
    <property type="protein sequence ID" value="ABJ03699.1"/>
    <property type="molecule type" value="Genomic_DNA"/>
</dbReference>
<dbReference type="RefSeq" id="WP_000609663.1">
    <property type="nucleotide sequence ID" value="NZ_CADILS010000036.1"/>
</dbReference>
<dbReference type="SMR" id="A1AJ59"/>
<dbReference type="GeneID" id="75169672"/>
<dbReference type="KEGG" id="ecv:APECO1_2238"/>
<dbReference type="HOGENOM" id="CLU_168367_0_0_6"/>
<dbReference type="Proteomes" id="UP000008216">
    <property type="component" value="Chromosome"/>
</dbReference>
<dbReference type="GO" id="GO:0045283">
    <property type="term" value="C:fumarate reductase complex"/>
    <property type="evidence" value="ECO:0007669"/>
    <property type="project" value="UniProtKB-UniRule"/>
</dbReference>
<dbReference type="GO" id="GO:0005886">
    <property type="term" value="C:plasma membrane"/>
    <property type="evidence" value="ECO:0007669"/>
    <property type="project" value="UniProtKB-SubCell"/>
</dbReference>
<dbReference type="GO" id="GO:0000104">
    <property type="term" value="F:succinate dehydrogenase activity"/>
    <property type="evidence" value="ECO:0007669"/>
    <property type="project" value="UniProtKB-UniRule"/>
</dbReference>
<dbReference type="GO" id="GO:0006106">
    <property type="term" value="P:fumarate metabolic process"/>
    <property type="evidence" value="ECO:0007669"/>
    <property type="project" value="InterPro"/>
</dbReference>
<dbReference type="CDD" id="cd00547">
    <property type="entry name" value="QFR_TypeD_subunitD"/>
    <property type="match status" value="1"/>
</dbReference>
<dbReference type="FunFam" id="1.20.1300.10:FF:000002">
    <property type="entry name" value="Fumarate reductase subunit D"/>
    <property type="match status" value="1"/>
</dbReference>
<dbReference type="Gene3D" id="1.20.1300.10">
    <property type="entry name" value="Fumarate reductase/succinate dehydrogenase, transmembrane subunit"/>
    <property type="match status" value="1"/>
</dbReference>
<dbReference type="HAMAP" id="MF_00709">
    <property type="entry name" value="Fumarate_red_D"/>
    <property type="match status" value="1"/>
</dbReference>
<dbReference type="InterPro" id="IPR003418">
    <property type="entry name" value="Fumarate_red_D"/>
</dbReference>
<dbReference type="InterPro" id="IPR034804">
    <property type="entry name" value="SQR/QFR_C/D"/>
</dbReference>
<dbReference type="NCBIfam" id="NF003977">
    <property type="entry name" value="PRK05470.1-1"/>
    <property type="match status" value="1"/>
</dbReference>
<dbReference type="Pfam" id="PF02313">
    <property type="entry name" value="Fumarate_red_D"/>
    <property type="match status" value="1"/>
</dbReference>
<dbReference type="PIRSF" id="PIRSF000179">
    <property type="entry name" value="FrdD"/>
    <property type="match status" value="1"/>
</dbReference>
<dbReference type="SUPFAM" id="SSF81343">
    <property type="entry name" value="Fumarate reductase respiratory complex transmembrane subunits"/>
    <property type="match status" value="1"/>
</dbReference>
<sequence length="119" mass="13107">MINPNPKRSDEPVFWGLFGAGGMWSAIIAPVMILLVGILLPLGLFPGDALSYERVLAFAQSFIGRVFLFLMIVLPLWCGLHRMHHAMHDLKIHVPAGKWVFYGLAAILTVVTLIGVVTI</sequence>